<sequence length="196" mass="21204">MSYYAFEGLIPVVHPTAFVHPSAVLIGYVIVGAGVYIGPLASLRGDYGRLIVQAGANIQDGCIMHGYCDTDTIVGENGHIGHGAILHGCVIGRDALVGMNSVIMDGAVIGEESIVAAMSFVKAGFHGEKRQLLMGTPARAVRSVSDDELHWKRLNTKEYQDLVGRCHASLHETQPLRQMEENRPRLQGTTDVTPKR</sequence>
<comment type="function">
    <text evidence="1">Overproduction of CaiE stimulates the activity of CaiB and CaiD.</text>
</comment>
<comment type="pathway">
    <text evidence="1">Amine and polyamine metabolism; carnitine metabolism.</text>
</comment>
<comment type="similarity">
    <text evidence="1">Belongs to the transferase hexapeptide repeat family.</text>
</comment>
<comment type="sequence caution" evidence="3">
    <conflict type="erroneous initiation">
        <sequence resource="EMBL-CDS" id="ABB60295"/>
    </conflict>
</comment>
<evidence type="ECO:0000255" key="1">
    <source>
        <dbReference type="HAMAP-Rule" id="MF_01525"/>
    </source>
</evidence>
<evidence type="ECO:0000256" key="2">
    <source>
        <dbReference type="SAM" id="MobiDB-lite"/>
    </source>
</evidence>
<evidence type="ECO:0000305" key="3"/>
<proteinExistence type="inferred from homology"/>
<reference key="1">
    <citation type="journal article" date="2005" name="Nucleic Acids Res.">
        <title>Genome dynamics and diversity of Shigella species, the etiologic agents of bacillary dysentery.</title>
        <authorList>
            <person name="Yang F."/>
            <person name="Yang J."/>
            <person name="Zhang X."/>
            <person name="Chen L."/>
            <person name="Jiang Y."/>
            <person name="Yan Y."/>
            <person name="Tang X."/>
            <person name="Wang J."/>
            <person name="Xiong Z."/>
            <person name="Dong J."/>
            <person name="Xue Y."/>
            <person name="Zhu Y."/>
            <person name="Xu X."/>
            <person name="Sun L."/>
            <person name="Chen S."/>
            <person name="Nie H."/>
            <person name="Peng J."/>
            <person name="Xu J."/>
            <person name="Wang Y."/>
            <person name="Yuan Z."/>
            <person name="Wen Y."/>
            <person name="Yao Z."/>
            <person name="Shen Y."/>
            <person name="Qiang B."/>
            <person name="Hou Y."/>
            <person name="Yu J."/>
            <person name="Jin Q."/>
        </authorList>
    </citation>
    <scope>NUCLEOTIDE SEQUENCE [LARGE SCALE GENOMIC DNA]</scope>
    <source>
        <strain>Sd197</strain>
    </source>
</reference>
<dbReference type="EMBL" id="CP000034">
    <property type="protein sequence ID" value="ABB60295.1"/>
    <property type="status" value="ALT_INIT"/>
    <property type="molecule type" value="Genomic_DNA"/>
</dbReference>
<dbReference type="RefSeq" id="WP_000122900.1">
    <property type="nucleotide sequence ID" value="NC_007606.1"/>
</dbReference>
<dbReference type="RefSeq" id="YP_401784.1">
    <property type="nucleotide sequence ID" value="NC_007606.1"/>
</dbReference>
<dbReference type="SMR" id="Q32K62"/>
<dbReference type="STRING" id="300267.SDY_0057"/>
<dbReference type="EnsemblBacteria" id="ABB60295">
    <property type="protein sequence ID" value="ABB60295"/>
    <property type="gene ID" value="SDY_0057"/>
</dbReference>
<dbReference type="KEGG" id="sdy:SDY_0057"/>
<dbReference type="PATRIC" id="fig|300267.13.peg.63"/>
<dbReference type="HOGENOM" id="CLU_064827_4_2_6"/>
<dbReference type="UniPathway" id="UPA00117"/>
<dbReference type="Proteomes" id="UP000002716">
    <property type="component" value="Chromosome"/>
</dbReference>
<dbReference type="GO" id="GO:0016740">
    <property type="term" value="F:transferase activity"/>
    <property type="evidence" value="ECO:0007669"/>
    <property type="project" value="UniProtKB-KW"/>
</dbReference>
<dbReference type="GO" id="GO:0009437">
    <property type="term" value="P:carnitine metabolic process"/>
    <property type="evidence" value="ECO:0007669"/>
    <property type="project" value="UniProtKB-UniRule"/>
</dbReference>
<dbReference type="CDD" id="cd04745">
    <property type="entry name" value="LbH_paaY_like"/>
    <property type="match status" value="1"/>
</dbReference>
<dbReference type="FunFam" id="2.160.10.10:FF:000012">
    <property type="entry name" value="Carnitine operon protein CaiE"/>
    <property type="match status" value="1"/>
</dbReference>
<dbReference type="Gene3D" id="2.160.10.10">
    <property type="entry name" value="Hexapeptide repeat proteins"/>
    <property type="match status" value="1"/>
</dbReference>
<dbReference type="HAMAP" id="MF_01525">
    <property type="entry name" value="CaiE"/>
    <property type="match status" value="1"/>
</dbReference>
<dbReference type="InterPro" id="IPR023446">
    <property type="entry name" value="CaiE"/>
</dbReference>
<dbReference type="InterPro" id="IPR001451">
    <property type="entry name" value="Hexapep"/>
</dbReference>
<dbReference type="InterPro" id="IPR050484">
    <property type="entry name" value="Transf_Hexapept/Carb_Anhydrase"/>
</dbReference>
<dbReference type="InterPro" id="IPR011004">
    <property type="entry name" value="Trimer_LpxA-like_sf"/>
</dbReference>
<dbReference type="NCBIfam" id="NF010150">
    <property type="entry name" value="PRK13627.1"/>
    <property type="match status" value="1"/>
</dbReference>
<dbReference type="PANTHER" id="PTHR13061">
    <property type="entry name" value="DYNACTIN SUBUNIT P25"/>
    <property type="match status" value="1"/>
</dbReference>
<dbReference type="PANTHER" id="PTHR13061:SF29">
    <property type="entry name" value="GAMMA CARBONIC ANHYDRASE-LIKE 1, MITOCHONDRIAL-RELATED"/>
    <property type="match status" value="1"/>
</dbReference>
<dbReference type="Pfam" id="PF00132">
    <property type="entry name" value="Hexapep"/>
    <property type="match status" value="1"/>
</dbReference>
<dbReference type="SUPFAM" id="SSF51161">
    <property type="entry name" value="Trimeric LpxA-like enzymes"/>
    <property type="match status" value="1"/>
</dbReference>
<feature type="chain" id="PRO_0000292726" description="Carnitine operon protein CaiE">
    <location>
        <begin position="1"/>
        <end position="196"/>
    </location>
</feature>
<feature type="region of interest" description="Disordered" evidence="2">
    <location>
        <begin position="173"/>
        <end position="196"/>
    </location>
</feature>
<feature type="compositionally biased region" description="Polar residues" evidence="2">
    <location>
        <begin position="187"/>
        <end position="196"/>
    </location>
</feature>
<organism>
    <name type="scientific">Shigella dysenteriae serotype 1 (strain Sd197)</name>
    <dbReference type="NCBI Taxonomy" id="300267"/>
    <lineage>
        <taxon>Bacteria</taxon>
        <taxon>Pseudomonadati</taxon>
        <taxon>Pseudomonadota</taxon>
        <taxon>Gammaproteobacteria</taxon>
        <taxon>Enterobacterales</taxon>
        <taxon>Enterobacteriaceae</taxon>
        <taxon>Shigella</taxon>
    </lineage>
</organism>
<name>CAIE_SHIDS</name>
<gene>
    <name evidence="1" type="primary">caiE</name>
    <name type="ordered locus">SDY_0057</name>
</gene>
<protein>
    <recommendedName>
        <fullName evidence="1">Carnitine operon protein CaiE</fullName>
    </recommendedName>
</protein>
<keyword id="KW-1185">Reference proteome</keyword>
<keyword id="KW-0677">Repeat</keyword>
<keyword id="KW-0808">Transferase</keyword>
<accession>Q32K62</accession>